<reference key="1">
    <citation type="journal article" date="2008" name="J. Proteomics">
        <title>A proteomics approach to identify proteins differentially expressed in Douglas-fir seedlings infected by Phellinus sulphurascens.</title>
        <authorList>
            <person name="Islam M.A."/>
            <person name="Sturrock R.N."/>
            <person name="Ekramoddoullah A.K.M."/>
        </authorList>
    </citation>
    <scope>IDENTIFICATION BY MASS SPECTROMETRY</scope>
</reference>
<keyword id="KW-0028">Amino-acid biosynthesis</keyword>
<keyword id="KW-0055">Arginine biosynthesis</keyword>
<keyword id="KW-0067">ATP-binding</keyword>
<keyword id="KW-0150">Chloroplast</keyword>
<keyword id="KW-0436">Ligase</keyword>
<keyword id="KW-0547">Nucleotide-binding</keyword>
<keyword id="KW-0934">Plastid</keyword>
<name>ASSY_PSEMZ</name>
<dbReference type="EC" id="6.3.4.5"/>
<dbReference type="UniPathway" id="UPA00068">
    <property type="reaction ID" value="UER00113"/>
</dbReference>
<dbReference type="GO" id="GO:0009507">
    <property type="term" value="C:chloroplast"/>
    <property type="evidence" value="ECO:0007669"/>
    <property type="project" value="UniProtKB-SubCell"/>
</dbReference>
<dbReference type="GO" id="GO:0004055">
    <property type="term" value="F:argininosuccinate synthase activity"/>
    <property type="evidence" value="ECO:0007669"/>
    <property type="project" value="UniProtKB-EC"/>
</dbReference>
<dbReference type="GO" id="GO:0005524">
    <property type="term" value="F:ATP binding"/>
    <property type="evidence" value="ECO:0007669"/>
    <property type="project" value="UniProtKB-KW"/>
</dbReference>
<dbReference type="GO" id="GO:0006526">
    <property type="term" value="P:L-arginine biosynthetic process"/>
    <property type="evidence" value="ECO:0007669"/>
    <property type="project" value="UniProtKB-UniPathway"/>
</dbReference>
<feature type="chain" id="PRO_0000347323" description="Argininosuccinate synthase, chloroplastic">
    <location>
        <begin position="1" status="less than"/>
        <end position="18" status="greater than"/>
    </location>
</feature>
<feature type="non-consecutive residues" evidence="3">
    <location>
        <begin position="6"/>
        <end position="7"/>
    </location>
</feature>
<feature type="non-terminal residue" evidence="3">
    <location>
        <position position="1"/>
    </location>
</feature>
<feature type="non-terminal residue" evidence="3">
    <location>
        <position position="18"/>
    </location>
</feature>
<sequence>WFDPLRITETTTGSVTLK</sequence>
<protein>
    <recommendedName>
        <fullName evidence="1">Argininosuccinate synthase, chloroplastic</fullName>
        <ecNumber>6.3.4.5</ecNumber>
    </recommendedName>
    <alternativeName>
        <fullName evidence="1">Citrulline--aspartate ligase</fullName>
    </alternativeName>
</protein>
<organism>
    <name type="scientific">Pseudotsuga menziesii</name>
    <name type="common">Douglas-fir</name>
    <name type="synonym">Abies menziesii</name>
    <dbReference type="NCBI Taxonomy" id="3357"/>
    <lineage>
        <taxon>Eukaryota</taxon>
        <taxon>Viridiplantae</taxon>
        <taxon>Streptophyta</taxon>
        <taxon>Embryophyta</taxon>
        <taxon>Tracheophyta</taxon>
        <taxon>Spermatophyta</taxon>
        <taxon>Pinopsida</taxon>
        <taxon>Pinidae</taxon>
        <taxon>Conifers I</taxon>
        <taxon>Pinales</taxon>
        <taxon>Pinaceae</taxon>
        <taxon>Pseudotsuga</taxon>
    </lineage>
</organism>
<evidence type="ECO:0000250" key="1">
    <source>
        <dbReference type="UniProtKB" id="Q9SZX3"/>
    </source>
</evidence>
<evidence type="ECO:0000255" key="2"/>
<evidence type="ECO:0000303" key="3">
    <source>
    </source>
</evidence>
<comment type="catalytic activity">
    <reaction evidence="1">
        <text>L-citrulline + L-aspartate + ATP = 2-(N(omega)-L-arginino)succinate + AMP + diphosphate + H(+)</text>
        <dbReference type="Rhea" id="RHEA:10932"/>
        <dbReference type="ChEBI" id="CHEBI:15378"/>
        <dbReference type="ChEBI" id="CHEBI:29991"/>
        <dbReference type="ChEBI" id="CHEBI:30616"/>
        <dbReference type="ChEBI" id="CHEBI:33019"/>
        <dbReference type="ChEBI" id="CHEBI:57472"/>
        <dbReference type="ChEBI" id="CHEBI:57743"/>
        <dbReference type="ChEBI" id="CHEBI:456215"/>
        <dbReference type="EC" id="6.3.4.5"/>
    </reaction>
</comment>
<comment type="pathway">
    <text evidence="1">Amino-acid biosynthesis; L-arginine biosynthesis; L-arginine from L-ornithine and carbamoyl phosphate: step 2/3.</text>
</comment>
<comment type="subunit">
    <text evidence="1">Homotetramer.</text>
</comment>
<comment type="subcellular location">
    <subcellularLocation>
        <location evidence="1">Plastid</location>
        <location evidence="1">Chloroplast</location>
    </subcellularLocation>
</comment>
<comment type="similarity">
    <text evidence="2">Belongs to the argininosuccinate synthase family. Type 1 subfamily.</text>
</comment>
<proteinExistence type="evidence at protein level"/>
<accession>P85910</accession>